<gene>
    <name type="primary">NEUROG2</name>
    <name type="synonym">ATOH4</name>
    <name type="synonym">BHLHA8</name>
    <name type="synonym">NGN2</name>
</gene>
<protein>
    <recommendedName>
        <fullName>Neurogenin-2</fullName>
        <shortName>NGN-2</shortName>
    </recommendedName>
    <alternativeName>
        <fullName>Class A basic helix-loop-helix protein 8</fullName>
        <shortName>bHLHa8</shortName>
    </alternativeName>
    <alternativeName>
        <fullName>Protein atonal homolog 4</fullName>
    </alternativeName>
</protein>
<keyword id="KW-0010">Activator</keyword>
<keyword id="KW-0217">Developmental protein</keyword>
<keyword id="KW-0221">Differentiation</keyword>
<keyword id="KW-0238">DNA-binding</keyword>
<keyword id="KW-0524">Neurogenesis</keyword>
<keyword id="KW-0539">Nucleus</keyword>
<keyword id="KW-1185">Reference proteome</keyword>
<keyword id="KW-0804">Transcription</keyword>
<keyword id="KW-0805">Transcription regulation</keyword>
<name>NGN2_HUMAN</name>
<reference key="1">
    <citation type="journal article" date="2004" name="Genome Res.">
        <title>The status, quality, and expansion of the NIH full-length cDNA project: the Mammalian Gene Collection (MGC).</title>
        <authorList>
            <consortium name="The MGC Project Team"/>
        </authorList>
    </citation>
    <scope>NUCLEOTIDE SEQUENCE [LARGE SCALE MRNA]</scope>
    <source>
        <tissue>Brain</tissue>
    </source>
</reference>
<reference key="2">
    <citation type="submission" date="2000-09" db="EMBL/GenBank/DDBJ databases">
        <title>Neurogenin 2 expression in ventral and dorsal spinal neural tube progenitor cells is regulated by distinct enhancers.</title>
        <authorList>
            <person name="Simmons A.D."/>
            <person name="Horton S."/>
            <person name="Abney A.L."/>
            <person name="Johnson J.E."/>
        </authorList>
    </citation>
    <scope>NUCLEOTIDE SEQUENCE [GENOMIC DNA] OF 23-272</scope>
</reference>
<dbReference type="EMBL" id="BC036847">
    <property type="protein sequence ID" value="AAH36847.1"/>
    <property type="molecule type" value="mRNA"/>
</dbReference>
<dbReference type="EMBL" id="AF303002">
    <property type="protein sequence ID" value="AAG40770.1"/>
    <property type="molecule type" value="Genomic_DNA"/>
</dbReference>
<dbReference type="CCDS" id="CCDS3698.1"/>
<dbReference type="RefSeq" id="NP_076924.1">
    <property type="nucleotide sequence ID" value="NM_024019.4"/>
</dbReference>
<dbReference type="SMR" id="Q9H2A3"/>
<dbReference type="BioGRID" id="122020">
    <property type="interactions" value="4"/>
</dbReference>
<dbReference type="FunCoup" id="Q9H2A3">
    <property type="interactions" value="1080"/>
</dbReference>
<dbReference type="IntAct" id="Q9H2A3">
    <property type="interactions" value="3"/>
</dbReference>
<dbReference type="MINT" id="Q9H2A3"/>
<dbReference type="STRING" id="9606.ENSP00000317333"/>
<dbReference type="iPTMnet" id="Q9H2A3"/>
<dbReference type="PhosphoSitePlus" id="Q9H2A3"/>
<dbReference type="BioMuta" id="NEUROG2"/>
<dbReference type="DMDM" id="60392832"/>
<dbReference type="MassIVE" id="Q9H2A3"/>
<dbReference type="PaxDb" id="9606-ENSP00000317333"/>
<dbReference type="PeptideAtlas" id="Q9H2A3"/>
<dbReference type="ProteomicsDB" id="80519"/>
<dbReference type="Antibodypedia" id="26453">
    <property type="antibodies" value="355 antibodies from 35 providers"/>
</dbReference>
<dbReference type="DNASU" id="63973"/>
<dbReference type="Ensembl" id="ENST00000313341.4">
    <property type="protein sequence ID" value="ENSP00000317333.3"/>
    <property type="gene ID" value="ENSG00000178403.4"/>
</dbReference>
<dbReference type="GeneID" id="63973"/>
<dbReference type="KEGG" id="hsa:63973"/>
<dbReference type="MANE-Select" id="ENST00000313341.4">
    <property type="protein sequence ID" value="ENSP00000317333.3"/>
    <property type="RefSeq nucleotide sequence ID" value="NM_024019.4"/>
    <property type="RefSeq protein sequence ID" value="NP_076924.1"/>
</dbReference>
<dbReference type="UCSC" id="uc003ias.3">
    <property type="organism name" value="human"/>
</dbReference>
<dbReference type="AGR" id="HGNC:13805"/>
<dbReference type="CTD" id="63973"/>
<dbReference type="DisGeNET" id="63973"/>
<dbReference type="GeneCards" id="NEUROG2"/>
<dbReference type="HGNC" id="HGNC:13805">
    <property type="gene designation" value="NEUROG2"/>
</dbReference>
<dbReference type="HPA" id="ENSG00000178403">
    <property type="expression patterns" value="Tissue enhanced (brain, testis)"/>
</dbReference>
<dbReference type="MIM" id="606624">
    <property type="type" value="gene"/>
</dbReference>
<dbReference type="neXtProt" id="NX_Q9H2A3"/>
<dbReference type="OpenTargets" id="ENSG00000178403"/>
<dbReference type="PharmGKB" id="PA31570"/>
<dbReference type="VEuPathDB" id="HostDB:ENSG00000178403"/>
<dbReference type="eggNOG" id="KOG3898">
    <property type="taxonomic scope" value="Eukaryota"/>
</dbReference>
<dbReference type="GeneTree" id="ENSGT00940000162895"/>
<dbReference type="HOGENOM" id="CLU_097959_0_0_1"/>
<dbReference type="InParanoid" id="Q9H2A3"/>
<dbReference type="OMA" id="GLVHECK"/>
<dbReference type="OrthoDB" id="5969565at2759"/>
<dbReference type="PAN-GO" id="Q9H2A3">
    <property type="GO annotations" value="5 GO annotations based on evolutionary models"/>
</dbReference>
<dbReference type="PhylomeDB" id="Q9H2A3"/>
<dbReference type="TreeFam" id="TF315153"/>
<dbReference type="PathwayCommons" id="Q9H2A3"/>
<dbReference type="SignaLink" id="Q9H2A3"/>
<dbReference type="SIGNOR" id="Q9H2A3"/>
<dbReference type="BioGRID-ORCS" id="63973">
    <property type="hits" value="18 hits in 1178 CRISPR screens"/>
</dbReference>
<dbReference type="GeneWiki" id="NEUROG2"/>
<dbReference type="GenomeRNAi" id="63973"/>
<dbReference type="Pharos" id="Q9H2A3">
    <property type="development level" value="Tbio"/>
</dbReference>
<dbReference type="PRO" id="PR:Q9H2A3"/>
<dbReference type="Proteomes" id="UP000005640">
    <property type="component" value="Chromosome 4"/>
</dbReference>
<dbReference type="RNAct" id="Q9H2A3">
    <property type="molecule type" value="protein"/>
</dbReference>
<dbReference type="Bgee" id="ENSG00000178403">
    <property type="expression patterns" value="Expressed in ganglionic eminence and 26 other cell types or tissues"/>
</dbReference>
<dbReference type="GO" id="GO:0000785">
    <property type="term" value="C:chromatin"/>
    <property type="evidence" value="ECO:0000247"/>
    <property type="project" value="NTNU_SB"/>
</dbReference>
<dbReference type="GO" id="GO:0005634">
    <property type="term" value="C:nucleus"/>
    <property type="evidence" value="ECO:0000318"/>
    <property type="project" value="GO_Central"/>
</dbReference>
<dbReference type="GO" id="GO:0000981">
    <property type="term" value="F:DNA-binding transcription factor activity, RNA polymerase II-specific"/>
    <property type="evidence" value="ECO:0000247"/>
    <property type="project" value="NTNU_SB"/>
</dbReference>
<dbReference type="GO" id="GO:0070888">
    <property type="term" value="F:E-box binding"/>
    <property type="evidence" value="ECO:0000250"/>
    <property type="project" value="UniProtKB"/>
</dbReference>
<dbReference type="GO" id="GO:0046983">
    <property type="term" value="F:protein dimerization activity"/>
    <property type="evidence" value="ECO:0007669"/>
    <property type="project" value="InterPro"/>
</dbReference>
<dbReference type="GO" id="GO:1990837">
    <property type="term" value="F:sequence-specific double-stranded DNA binding"/>
    <property type="evidence" value="ECO:0000314"/>
    <property type="project" value="ARUK-UCL"/>
</dbReference>
<dbReference type="GO" id="GO:0061564">
    <property type="term" value="P:axon development"/>
    <property type="evidence" value="ECO:0000318"/>
    <property type="project" value="GO_Central"/>
</dbReference>
<dbReference type="GO" id="GO:0030900">
    <property type="term" value="P:forebrain development"/>
    <property type="evidence" value="ECO:0000318"/>
    <property type="project" value="GO_Central"/>
</dbReference>
<dbReference type="GO" id="GO:0051091">
    <property type="term" value="P:positive regulation of DNA-binding transcription factor activity"/>
    <property type="evidence" value="ECO:0000250"/>
    <property type="project" value="UniProtKB"/>
</dbReference>
<dbReference type="GO" id="GO:0045944">
    <property type="term" value="P:positive regulation of transcription by RNA polymerase II"/>
    <property type="evidence" value="ECO:0000318"/>
    <property type="project" value="GO_Central"/>
</dbReference>
<dbReference type="GO" id="GO:0007423">
    <property type="term" value="P:sensory organ development"/>
    <property type="evidence" value="ECO:0000318"/>
    <property type="project" value="GO_Central"/>
</dbReference>
<dbReference type="CDD" id="cd19717">
    <property type="entry name" value="bHLH_TS_NGN2_ATOH4"/>
    <property type="match status" value="1"/>
</dbReference>
<dbReference type="FunFam" id="4.10.280.10:FF:000006">
    <property type="entry name" value="Neurogenic differentiation factor"/>
    <property type="match status" value="1"/>
</dbReference>
<dbReference type="Gene3D" id="4.10.280.10">
    <property type="entry name" value="Helix-loop-helix DNA-binding domain"/>
    <property type="match status" value="1"/>
</dbReference>
<dbReference type="InterPro" id="IPR011598">
    <property type="entry name" value="bHLH_dom"/>
</dbReference>
<dbReference type="InterPro" id="IPR050359">
    <property type="entry name" value="bHLH_transcription_factors"/>
</dbReference>
<dbReference type="InterPro" id="IPR036638">
    <property type="entry name" value="HLH_DNA-bd_sf"/>
</dbReference>
<dbReference type="InterPro" id="IPR032655">
    <property type="entry name" value="Ngn-2_bHLH"/>
</dbReference>
<dbReference type="PANTHER" id="PTHR19290">
    <property type="entry name" value="BASIC HELIX-LOOP-HELIX PROTEIN NEUROGENIN-RELATED"/>
    <property type="match status" value="1"/>
</dbReference>
<dbReference type="PANTHER" id="PTHR19290:SF171">
    <property type="entry name" value="NEUROGENIN-2"/>
    <property type="match status" value="1"/>
</dbReference>
<dbReference type="Pfam" id="PF00010">
    <property type="entry name" value="HLH"/>
    <property type="match status" value="1"/>
</dbReference>
<dbReference type="SMART" id="SM00353">
    <property type="entry name" value="HLH"/>
    <property type="match status" value="1"/>
</dbReference>
<dbReference type="SUPFAM" id="SSF47459">
    <property type="entry name" value="HLH, helix-loop-helix DNA-binding domain"/>
    <property type="match status" value="1"/>
</dbReference>
<dbReference type="PROSITE" id="PS50888">
    <property type="entry name" value="BHLH"/>
    <property type="match status" value="1"/>
</dbReference>
<evidence type="ECO:0000250" key="1"/>
<evidence type="ECO:0000255" key="2">
    <source>
        <dbReference type="PROSITE-ProRule" id="PRU00981"/>
    </source>
</evidence>
<evidence type="ECO:0000256" key="3">
    <source>
        <dbReference type="SAM" id="MobiDB-lite"/>
    </source>
</evidence>
<organism>
    <name type="scientific">Homo sapiens</name>
    <name type="common">Human</name>
    <dbReference type="NCBI Taxonomy" id="9606"/>
    <lineage>
        <taxon>Eukaryota</taxon>
        <taxon>Metazoa</taxon>
        <taxon>Chordata</taxon>
        <taxon>Craniata</taxon>
        <taxon>Vertebrata</taxon>
        <taxon>Euteleostomi</taxon>
        <taxon>Mammalia</taxon>
        <taxon>Eutheria</taxon>
        <taxon>Euarchontoglires</taxon>
        <taxon>Primates</taxon>
        <taxon>Haplorrhini</taxon>
        <taxon>Catarrhini</taxon>
        <taxon>Hominidae</taxon>
        <taxon>Homo</taxon>
    </lineage>
</organism>
<proteinExistence type="evidence at protein level"/>
<sequence length="272" mass="28621">MFVKSETLELKEEEDVLVLLGSASPALAALTPLSSSADEEEEEEPGASGGARRQRGAEAGQGARGGVAAGAEGCRPARLLGLVHDCKRRPSRARAVSRGAKTAETVQRIKKTRRLKANNRERNRMHNLNAALDALREVLPTFPEDAKLTKIETLRFAHNYIWALTETLRLADHCGGGGGGLPGALFSEAVLLSPGGASAALSSSGDSPSPASTWSCTNSPAPSSSVSSNSTSPYSCTLSPASPAGSDMDYWQPPPPDKHRYAPHLPIARDCI</sequence>
<accession>Q9H2A3</accession>
<accession>Q8N416</accession>
<comment type="function">
    <text>Transcriptional regulator. Involved in neuronal differentiation. Activates transcription by binding to the E box (5'-CANNTG-3').</text>
</comment>
<comment type="subunit">
    <text evidence="1">Efficient DNA binding requires dimerization with another bHLH protein.</text>
</comment>
<comment type="interaction">
    <interactant intactId="EBI-7969348">
        <id>Q9H2A3</id>
    </interactant>
    <interactant intactId="EBI-357275">
        <id>Q99471</id>
        <label>PFDN5</label>
    </interactant>
    <organismsDiffer>false</organismsDiffer>
    <experiments>3</experiments>
</comment>
<comment type="subcellular location">
    <subcellularLocation>
        <location evidence="2">Nucleus</location>
    </subcellularLocation>
</comment>
<feature type="chain" id="PRO_0000127400" description="Neurogenin-2">
    <location>
        <begin position="1"/>
        <end position="272"/>
    </location>
</feature>
<feature type="domain" description="bHLH" evidence="2">
    <location>
        <begin position="112"/>
        <end position="164"/>
    </location>
</feature>
<feature type="region of interest" description="Disordered" evidence="3">
    <location>
        <begin position="30"/>
        <end position="69"/>
    </location>
</feature>
<feature type="region of interest" description="Disordered" evidence="3">
    <location>
        <begin position="197"/>
        <end position="264"/>
    </location>
</feature>
<feature type="compositionally biased region" description="Low complexity" evidence="3">
    <location>
        <begin position="197"/>
        <end position="239"/>
    </location>
</feature>